<dbReference type="EC" id="1.8.1.2" evidence="1"/>
<dbReference type="EMBL" id="CP000266">
    <property type="protein sequence ID" value="ABF04828.1"/>
    <property type="molecule type" value="Genomic_DNA"/>
</dbReference>
<dbReference type="RefSeq" id="WP_001290718.1">
    <property type="nucleotide sequence ID" value="NC_008258.1"/>
</dbReference>
<dbReference type="SMR" id="Q0T1I7"/>
<dbReference type="KEGG" id="sfv:SFV_2742"/>
<dbReference type="HOGENOM" id="CLU_001975_3_2_6"/>
<dbReference type="UniPathway" id="UPA00140">
    <property type="reaction ID" value="UER00207"/>
</dbReference>
<dbReference type="Proteomes" id="UP000000659">
    <property type="component" value="Chromosome"/>
</dbReference>
<dbReference type="GO" id="GO:0009337">
    <property type="term" value="C:sulfite reductase complex (NADPH)"/>
    <property type="evidence" value="ECO:0007669"/>
    <property type="project" value="InterPro"/>
</dbReference>
<dbReference type="GO" id="GO:0051539">
    <property type="term" value="F:4 iron, 4 sulfur cluster binding"/>
    <property type="evidence" value="ECO:0007669"/>
    <property type="project" value="UniProtKB-KW"/>
</dbReference>
<dbReference type="GO" id="GO:0020037">
    <property type="term" value="F:heme binding"/>
    <property type="evidence" value="ECO:0007669"/>
    <property type="project" value="InterPro"/>
</dbReference>
<dbReference type="GO" id="GO:0046872">
    <property type="term" value="F:metal ion binding"/>
    <property type="evidence" value="ECO:0007669"/>
    <property type="project" value="UniProtKB-KW"/>
</dbReference>
<dbReference type="GO" id="GO:0050661">
    <property type="term" value="F:NADP binding"/>
    <property type="evidence" value="ECO:0007669"/>
    <property type="project" value="InterPro"/>
</dbReference>
<dbReference type="GO" id="GO:0050311">
    <property type="term" value="F:sulfite reductase (ferredoxin) activity"/>
    <property type="evidence" value="ECO:0007669"/>
    <property type="project" value="TreeGrafter"/>
</dbReference>
<dbReference type="GO" id="GO:0004783">
    <property type="term" value="F:sulfite reductase (NADPH) activity"/>
    <property type="evidence" value="ECO:0007669"/>
    <property type="project" value="UniProtKB-UniRule"/>
</dbReference>
<dbReference type="GO" id="GO:0019344">
    <property type="term" value="P:cysteine biosynthetic process"/>
    <property type="evidence" value="ECO:0007669"/>
    <property type="project" value="UniProtKB-KW"/>
</dbReference>
<dbReference type="GO" id="GO:0070814">
    <property type="term" value="P:hydrogen sulfide biosynthetic process"/>
    <property type="evidence" value="ECO:0007669"/>
    <property type="project" value="UniProtKB-UniRule"/>
</dbReference>
<dbReference type="GO" id="GO:0000103">
    <property type="term" value="P:sulfate assimilation"/>
    <property type="evidence" value="ECO:0007669"/>
    <property type="project" value="UniProtKB-UniRule"/>
</dbReference>
<dbReference type="FunFam" id="3.30.413.10:FF:000003">
    <property type="entry name" value="Sulfite reductase [NADPH] hemoprotein beta-component"/>
    <property type="match status" value="1"/>
</dbReference>
<dbReference type="FunFam" id="3.30.413.10:FF:000004">
    <property type="entry name" value="Sulfite reductase [NADPH] hemoprotein beta-component"/>
    <property type="match status" value="1"/>
</dbReference>
<dbReference type="Gene3D" id="3.30.413.10">
    <property type="entry name" value="Sulfite Reductase Hemoprotein, domain 1"/>
    <property type="match status" value="2"/>
</dbReference>
<dbReference type="HAMAP" id="MF_01540">
    <property type="entry name" value="CysI"/>
    <property type="match status" value="1"/>
</dbReference>
<dbReference type="InterPro" id="IPR011786">
    <property type="entry name" value="CysI"/>
</dbReference>
<dbReference type="InterPro" id="IPR005117">
    <property type="entry name" value="NiRdtase/SiRdtase_haem-b_fer"/>
</dbReference>
<dbReference type="InterPro" id="IPR036136">
    <property type="entry name" value="Nit/Sulf_reduc_fer-like_dom_sf"/>
</dbReference>
<dbReference type="InterPro" id="IPR006067">
    <property type="entry name" value="NO2/SO3_Rdtase_4Fe4S_dom"/>
</dbReference>
<dbReference type="InterPro" id="IPR045169">
    <property type="entry name" value="NO2/SO3_Rdtase_4Fe4S_prot"/>
</dbReference>
<dbReference type="InterPro" id="IPR045854">
    <property type="entry name" value="NO2/SO3_Rdtase_4Fe4S_sf"/>
</dbReference>
<dbReference type="InterPro" id="IPR006066">
    <property type="entry name" value="NO2/SO3_Rdtase_FeS/sirohaem_BS"/>
</dbReference>
<dbReference type="NCBIfam" id="TIGR02041">
    <property type="entry name" value="CysI"/>
    <property type="match status" value="1"/>
</dbReference>
<dbReference type="NCBIfam" id="NF010029">
    <property type="entry name" value="PRK13504.1"/>
    <property type="match status" value="1"/>
</dbReference>
<dbReference type="PANTHER" id="PTHR11493:SF47">
    <property type="entry name" value="SULFITE REDUCTASE [NADPH] SUBUNIT BETA"/>
    <property type="match status" value="1"/>
</dbReference>
<dbReference type="PANTHER" id="PTHR11493">
    <property type="entry name" value="SULFITE REDUCTASE [NADPH] SUBUNIT BETA-RELATED"/>
    <property type="match status" value="1"/>
</dbReference>
<dbReference type="Pfam" id="PF01077">
    <property type="entry name" value="NIR_SIR"/>
    <property type="match status" value="1"/>
</dbReference>
<dbReference type="Pfam" id="PF03460">
    <property type="entry name" value="NIR_SIR_ferr"/>
    <property type="match status" value="2"/>
</dbReference>
<dbReference type="PRINTS" id="PR00397">
    <property type="entry name" value="SIROHAEM"/>
</dbReference>
<dbReference type="SUPFAM" id="SSF56014">
    <property type="entry name" value="Nitrite and sulphite reductase 4Fe-4S domain-like"/>
    <property type="match status" value="2"/>
</dbReference>
<dbReference type="SUPFAM" id="SSF55124">
    <property type="entry name" value="Nitrite/Sulfite reductase N-terminal domain-like"/>
    <property type="match status" value="2"/>
</dbReference>
<dbReference type="PROSITE" id="PS00365">
    <property type="entry name" value="NIR_SIR"/>
    <property type="match status" value="1"/>
</dbReference>
<keyword id="KW-0004">4Fe-4S</keyword>
<keyword id="KW-0028">Amino-acid biosynthesis</keyword>
<keyword id="KW-0198">Cysteine biosynthesis</keyword>
<keyword id="KW-0349">Heme</keyword>
<keyword id="KW-0408">Iron</keyword>
<keyword id="KW-0411">Iron-sulfur</keyword>
<keyword id="KW-0479">Metal-binding</keyword>
<keyword id="KW-0521">NADP</keyword>
<keyword id="KW-0560">Oxidoreductase</keyword>
<accession>Q0T1I7</accession>
<reference key="1">
    <citation type="journal article" date="2006" name="BMC Genomics">
        <title>Complete genome sequence of Shigella flexneri 5b and comparison with Shigella flexneri 2a.</title>
        <authorList>
            <person name="Nie H."/>
            <person name="Yang F."/>
            <person name="Zhang X."/>
            <person name="Yang J."/>
            <person name="Chen L."/>
            <person name="Wang J."/>
            <person name="Xiong Z."/>
            <person name="Peng J."/>
            <person name="Sun L."/>
            <person name="Dong J."/>
            <person name="Xue Y."/>
            <person name="Xu X."/>
            <person name="Chen S."/>
            <person name="Yao Z."/>
            <person name="Shen Y."/>
            <person name="Jin Q."/>
        </authorList>
    </citation>
    <scope>NUCLEOTIDE SEQUENCE [LARGE SCALE GENOMIC DNA]</scope>
    <source>
        <strain>8401</strain>
    </source>
</reference>
<sequence>MSEKHPGPLVVEGKLTDAERMKLESNYLRGTIAEDLNDGLTGGFKGDNFLLIRFHGMYQQDDRDIRAERAEQKLEPRHAMLLRCRLPGGVITTKQWQAIDKFAGENTIYGSIRLTNRQTFQFHGILKKNVKPVHQMLHSVGLDALATANDMNRNVLCTSNPYESQLHAEAYEWAKKISEHLLPRTRAYAEIWLDQEKVATTDEEPILGQTYLPRKFKTTVVIPPQNDIDLHANDMNFVAIAENGKLVGFNLLVGGGLSIEHGNKKTYARTASEFGYLPLEHTLAVAEAVVTTQRDWGNRTDRKNAKTKYTLERVGVETFKAEVERRAGIKFEPSRPYEFTGRGDRIGWVKGIDDNWHLTLFIENGRILDYPGRPLKTGLLEIAKIHKGDFRITANQNLIIAGVPESEKAKIEKIAKESGLMNAVTPQRENSMACVSFPTCPLAMAEAERFLPSFIDNIDNLMVKHGVSDEHIVMRVTGCPNGCGRAMLAEVGLVGKAPGRYNLHLGGNRIGTRIPRMYKENITEPEILASLDELIGRWAKEREAGEGFGDFTVRAGIIRPVLDPARDLWD</sequence>
<protein>
    <recommendedName>
        <fullName evidence="1">Sulfite reductase [NADPH] hemoprotein beta-component</fullName>
        <shortName evidence="1">SiR-HP</shortName>
        <shortName evidence="1">SiRHP</shortName>
        <ecNumber evidence="1">1.8.1.2</ecNumber>
    </recommendedName>
</protein>
<gene>
    <name evidence="1" type="primary">cysI</name>
    <name type="ordered locus">SFV_2742</name>
</gene>
<organism>
    <name type="scientific">Shigella flexneri serotype 5b (strain 8401)</name>
    <dbReference type="NCBI Taxonomy" id="373384"/>
    <lineage>
        <taxon>Bacteria</taxon>
        <taxon>Pseudomonadati</taxon>
        <taxon>Pseudomonadota</taxon>
        <taxon>Gammaproteobacteria</taxon>
        <taxon>Enterobacterales</taxon>
        <taxon>Enterobacteriaceae</taxon>
        <taxon>Shigella</taxon>
    </lineage>
</organism>
<comment type="function">
    <text evidence="1">Component of the sulfite reductase complex that catalyzes the 6-electron reduction of sulfite to sulfide. This is one of several activities required for the biosynthesis of L-cysteine from sulfate.</text>
</comment>
<comment type="catalytic activity">
    <reaction evidence="1">
        <text>hydrogen sulfide + 3 NADP(+) + 3 H2O = sulfite + 3 NADPH + 4 H(+)</text>
        <dbReference type="Rhea" id="RHEA:13801"/>
        <dbReference type="ChEBI" id="CHEBI:15377"/>
        <dbReference type="ChEBI" id="CHEBI:15378"/>
        <dbReference type="ChEBI" id="CHEBI:17359"/>
        <dbReference type="ChEBI" id="CHEBI:29919"/>
        <dbReference type="ChEBI" id="CHEBI:57783"/>
        <dbReference type="ChEBI" id="CHEBI:58349"/>
        <dbReference type="EC" id="1.8.1.2"/>
    </reaction>
</comment>
<comment type="cofactor">
    <cofactor evidence="1">
        <name>siroheme</name>
        <dbReference type="ChEBI" id="CHEBI:60052"/>
    </cofactor>
    <text evidence="1">Binds 1 siroheme per subunit.</text>
</comment>
<comment type="cofactor">
    <cofactor evidence="1">
        <name>[4Fe-4S] cluster</name>
        <dbReference type="ChEBI" id="CHEBI:49883"/>
    </cofactor>
    <text evidence="1">Binds 1 [4Fe-4S] cluster per subunit.</text>
</comment>
<comment type="pathway">
    <text evidence="1">Sulfur metabolism; hydrogen sulfide biosynthesis; hydrogen sulfide from sulfite (NADPH route): step 1/1.</text>
</comment>
<comment type="subunit">
    <text evidence="1">Alpha(8)-beta(8). The alpha component is a flavoprotein, the beta component is a hemoprotein.</text>
</comment>
<comment type="similarity">
    <text evidence="1">Belongs to the nitrite and sulfite reductase 4Fe-4S domain family.</text>
</comment>
<evidence type="ECO:0000255" key="1">
    <source>
        <dbReference type="HAMAP-Rule" id="MF_01540"/>
    </source>
</evidence>
<name>CYSI_SHIF8</name>
<proteinExistence type="inferred from homology"/>
<feature type="chain" id="PRO_1000068777" description="Sulfite reductase [NADPH] hemoprotein beta-component">
    <location>
        <begin position="1"/>
        <end position="570"/>
    </location>
</feature>
<feature type="binding site" evidence="1">
    <location>
        <position position="434"/>
    </location>
    <ligand>
        <name>[4Fe-4S] cluster</name>
        <dbReference type="ChEBI" id="CHEBI:49883"/>
    </ligand>
</feature>
<feature type="binding site" evidence="1">
    <location>
        <position position="440"/>
    </location>
    <ligand>
        <name>[4Fe-4S] cluster</name>
        <dbReference type="ChEBI" id="CHEBI:49883"/>
    </ligand>
</feature>
<feature type="binding site" evidence="1">
    <location>
        <position position="479"/>
    </location>
    <ligand>
        <name>[4Fe-4S] cluster</name>
        <dbReference type="ChEBI" id="CHEBI:49883"/>
    </ligand>
</feature>
<feature type="binding site" evidence="1">
    <location>
        <position position="483"/>
    </location>
    <ligand>
        <name>[4Fe-4S] cluster</name>
        <dbReference type="ChEBI" id="CHEBI:49883"/>
    </ligand>
</feature>
<feature type="binding site" description="axial binding residue" evidence="1">
    <location>
        <position position="483"/>
    </location>
    <ligand>
        <name>siroheme</name>
        <dbReference type="ChEBI" id="CHEBI:60052"/>
    </ligand>
    <ligandPart>
        <name>Fe</name>
        <dbReference type="ChEBI" id="CHEBI:18248"/>
    </ligandPart>
</feature>